<gene>
    <name evidence="1" type="primary">rimP</name>
    <name type="ordered locus">Sfum_1226</name>
</gene>
<proteinExistence type="inferred from homology"/>
<keyword id="KW-0963">Cytoplasm</keyword>
<keyword id="KW-1185">Reference proteome</keyword>
<keyword id="KW-0690">Ribosome biogenesis</keyword>
<sequence length="168" mass="19388">MKKSDPAPGGEEKVDRIVRQVWDLTEPVIRAEGMEIIEIEYRRESPGWVLRVFVDQEGGVSVDDCARISRVVGDLLDVADIIHYPYHLEVSSPGLNRPLRKREQFAKVVGKVIEVKTLVPFGTRRNFKGILKEVGVERIRMDCDNQLFEIPFSNMDRARLRYFDSQED</sequence>
<protein>
    <recommendedName>
        <fullName evidence="1">Ribosome maturation factor RimP</fullName>
    </recommendedName>
</protein>
<feature type="chain" id="PRO_0000384794" description="Ribosome maturation factor RimP">
    <location>
        <begin position="1"/>
        <end position="168"/>
    </location>
</feature>
<comment type="function">
    <text evidence="1">Required for maturation of 30S ribosomal subunits.</text>
</comment>
<comment type="subcellular location">
    <subcellularLocation>
        <location evidence="1">Cytoplasm</location>
    </subcellularLocation>
</comment>
<comment type="similarity">
    <text evidence="1">Belongs to the RimP family.</text>
</comment>
<name>RIMP_SYNFM</name>
<evidence type="ECO:0000255" key="1">
    <source>
        <dbReference type="HAMAP-Rule" id="MF_01077"/>
    </source>
</evidence>
<organism>
    <name type="scientific">Syntrophobacter fumaroxidans (strain DSM 10017 / MPOB)</name>
    <dbReference type="NCBI Taxonomy" id="335543"/>
    <lineage>
        <taxon>Bacteria</taxon>
        <taxon>Pseudomonadati</taxon>
        <taxon>Thermodesulfobacteriota</taxon>
        <taxon>Syntrophobacteria</taxon>
        <taxon>Syntrophobacterales</taxon>
        <taxon>Syntrophobacteraceae</taxon>
        <taxon>Syntrophobacter</taxon>
    </lineage>
</organism>
<accession>A0LHL6</accession>
<reference key="1">
    <citation type="submission" date="2006-10" db="EMBL/GenBank/DDBJ databases">
        <title>Complete sequence of Syntrophobacter fumaroxidans MPOB.</title>
        <authorList>
            <consortium name="US DOE Joint Genome Institute"/>
            <person name="Copeland A."/>
            <person name="Lucas S."/>
            <person name="Lapidus A."/>
            <person name="Barry K."/>
            <person name="Detter J.C."/>
            <person name="Glavina del Rio T."/>
            <person name="Hammon N."/>
            <person name="Israni S."/>
            <person name="Pitluck S."/>
            <person name="Goltsman E.G."/>
            <person name="Martinez M."/>
            <person name="Schmutz J."/>
            <person name="Larimer F."/>
            <person name="Land M."/>
            <person name="Hauser L."/>
            <person name="Kyrpides N."/>
            <person name="Kim E."/>
            <person name="Boone D.R."/>
            <person name="Brockman F."/>
            <person name="Culley D."/>
            <person name="Ferry J."/>
            <person name="Gunsalus R."/>
            <person name="McInerney M.J."/>
            <person name="Morrison M."/>
            <person name="Plugge C."/>
            <person name="Rohlin L."/>
            <person name="Scholten J."/>
            <person name="Sieber J."/>
            <person name="Stams A.J.M."/>
            <person name="Worm P."/>
            <person name="Henstra A.M."/>
            <person name="Richardson P."/>
        </authorList>
    </citation>
    <scope>NUCLEOTIDE SEQUENCE [LARGE SCALE GENOMIC DNA]</scope>
    <source>
        <strain>DSM 10017 / MPOB</strain>
    </source>
</reference>
<dbReference type="EMBL" id="CP000478">
    <property type="protein sequence ID" value="ABK16918.1"/>
    <property type="molecule type" value="Genomic_DNA"/>
</dbReference>
<dbReference type="RefSeq" id="WP_011698089.1">
    <property type="nucleotide sequence ID" value="NC_008554.1"/>
</dbReference>
<dbReference type="SMR" id="A0LHL6"/>
<dbReference type="FunCoup" id="A0LHL6">
    <property type="interactions" value="334"/>
</dbReference>
<dbReference type="STRING" id="335543.Sfum_1226"/>
<dbReference type="KEGG" id="sfu:Sfum_1226"/>
<dbReference type="eggNOG" id="COG0779">
    <property type="taxonomic scope" value="Bacteria"/>
</dbReference>
<dbReference type="HOGENOM" id="CLU_070525_2_2_7"/>
<dbReference type="InParanoid" id="A0LHL6"/>
<dbReference type="OrthoDB" id="9805006at2"/>
<dbReference type="Proteomes" id="UP000001784">
    <property type="component" value="Chromosome"/>
</dbReference>
<dbReference type="GO" id="GO:0005829">
    <property type="term" value="C:cytosol"/>
    <property type="evidence" value="ECO:0007669"/>
    <property type="project" value="TreeGrafter"/>
</dbReference>
<dbReference type="GO" id="GO:0000028">
    <property type="term" value="P:ribosomal small subunit assembly"/>
    <property type="evidence" value="ECO:0007669"/>
    <property type="project" value="TreeGrafter"/>
</dbReference>
<dbReference type="GO" id="GO:0006412">
    <property type="term" value="P:translation"/>
    <property type="evidence" value="ECO:0007669"/>
    <property type="project" value="TreeGrafter"/>
</dbReference>
<dbReference type="CDD" id="cd01734">
    <property type="entry name" value="YlxS_C"/>
    <property type="match status" value="1"/>
</dbReference>
<dbReference type="FunFam" id="3.30.300.70:FF:000001">
    <property type="entry name" value="Ribosome maturation factor RimP"/>
    <property type="match status" value="1"/>
</dbReference>
<dbReference type="Gene3D" id="2.30.30.180">
    <property type="entry name" value="Ribosome maturation factor RimP, C-terminal domain"/>
    <property type="match status" value="1"/>
</dbReference>
<dbReference type="Gene3D" id="3.30.300.70">
    <property type="entry name" value="RimP-like superfamily, N-terminal"/>
    <property type="match status" value="1"/>
</dbReference>
<dbReference type="HAMAP" id="MF_01077">
    <property type="entry name" value="RimP"/>
    <property type="match status" value="1"/>
</dbReference>
<dbReference type="InterPro" id="IPR003728">
    <property type="entry name" value="Ribosome_maturation_RimP"/>
</dbReference>
<dbReference type="InterPro" id="IPR028998">
    <property type="entry name" value="RimP_C"/>
</dbReference>
<dbReference type="InterPro" id="IPR036847">
    <property type="entry name" value="RimP_C_sf"/>
</dbReference>
<dbReference type="InterPro" id="IPR028989">
    <property type="entry name" value="RimP_N"/>
</dbReference>
<dbReference type="InterPro" id="IPR035956">
    <property type="entry name" value="RimP_N_sf"/>
</dbReference>
<dbReference type="PANTHER" id="PTHR33867">
    <property type="entry name" value="RIBOSOME MATURATION FACTOR RIMP"/>
    <property type="match status" value="1"/>
</dbReference>
<dbReference type="PANTHER" id="PTHR33867:SF1">
    <property type="entry name" value="RIBOSOME MATURATION FACTOR RIMP"/>
    <property type="match status" value="1"/>
</dbReference>
<dbReference type="Pfam" id="PF17384">
    <property type="entry name" value="DUF150_C"/>
    <property type="match status" value="1"/>
</dbReference>
<dbReference type="Pfam" id="PF02576">
    <property type="entry name" value="RimP_N"/>
    <property type="match status" value="1"/>
</dbReference>
<dbReference type="SUPFAM" id="SSF74942">
    <property type="entry name" value="YhbC-like, C-terminal domain"/>
    <property type="match status" value="1"/>
</dbReference>
<dbReference type="SUPFAM" id="SSF75420">
    <property type="entry name" value="YhbC-like, N-terminal domain"/>
    <property type="match status" value="1"/>
</dbReference>